<dbReference type="EMBL" id="AC023628">
    <property type="protein sequence ID" value="AAF97339.1"/>
    <property type="status" value="ALT_INIT"/>
    <property type="molecule type" value="Genomic_DNA"/>
</dbReference>
<dbReference type="EMBL" id="CP002684">
    <property type="protein sequence ID" value="AEE27277.1"/>
    <property type="molecule type" value="Genomic_DNA"/>
</dbReference>
<dbReference type="EMBL" id="BT006399">
    <property type="protein sequence ID" value="AAP21207.1"/>
    <property type="molecule type" value="mRNA"/>
</dbReference>
<dbReference type="EMBL" id="AK227623">
    <property type="protein sequence ID" value="BAE99614.1"/>
    <property type="molecule type" value="mRNA"/>
</dbReference>
<dbReference type="EMBL" id="AY087967">
    <property type="protein sequence ID" value="AAM65514.1"/>
    <property type="status" value="ALT_INIT"/>
    <property type="molecule type" value="mRNA"/>
</dbReference>
<dbReference type="RefSeq" id="NP_563626.1">
    <property type="nucleotide sequence ID" value="NM_100018.5"/>
</dbReference>
<dbReference type="PDB" id="3OQU">
    <property type="method" value="X-ray"/>
    <property type="resolution" value="2.68 A"/>
    <property type="chains" value="A/B=1-187"/>
</dbReference>
<dbReference type="PDB" id="3W9R">
    <property type="method" value="X-ray"/>
    <property type="resolution" value="1.90 A"/>
    <property type="chains" value="A=1-187"/>
</dbReference>
<dbReference type="PDBsum" id="3OQU"/>
<dbReference type="PDBsum" id="3W9R"/>
<dbReference type="SMR" id="Q84MC7"/>
<dbReference type="BioGRID" id="23691">
    <property type="interactions" value="45"/>
</dbReference>
<dbReference type="DIP" id="DIP-53480N"/>
<dbReference type="FunCoup" id="Q84MC7">
    <property type="interactions" value="436"/>
</dbReference>
<dbReference type="IntAct" id="Q84MC7">
    <property type="interactions" value="44"/>
</dbReference>
<dbReference type="STRING" id="3702.Q84MC7"/>
<dbReference type="PaxDb" id="3702-AT1G01360.1"/>
<dbReference type="ProteomicsDB" id="226014"/>
<dbReference type="EnsemblPlants" id="AT1G01360.1">
    <property type="protein sequence ID" value="AT1G01360.1"/>
    <property type="gene ID" value="AT1G01360"/>
</dbReference>
<dbReference type="GeneID" id="838452"/>
<dbReference type="Gramene" id="AT1G01360.1">
    <property type="protein sequence ID" value="AT1G01360.1"/>
    <property type="gene ID" value="AT1G01360"/>
</dbReference>
<dbReference type="KEGG" id="ath:AT1G01360"/>
<dbReference type="Araport" id="AT1G01360"/>
<dbReference type="TAIR" id="AT1G01360">
    <property type="gene designation" value="RCAR1"/>
</dbReference>
<dbReference type="eggNOG" id="ENOG502QPYH">
    <property type="taxonomic scope" value="Eukaryota"/>
</dbReference>
<dbReference type="HOGENOM" id="CLU_077517_0_0_1"/>
<dbReference type="InParanoid" id="Q84MC7"/>
<dbReference type="OMA" id="MESEYVR"/>
<dbReference type="PhylomeDB" id="Q84MC7"/>
<dbReference type="EvolutionaryTrace" id="Q84MC7"/>
<dbReference type="PRO" id="PR:Q84MC7"/>
<dbReference type="Proteomes" id="UP000006548">
    <property type="component" value="Chromosome 1"/>
</dbReference>
<dbReference type="ExpressionAtlas" id="Q84MC7">
    <property type="expression patterns" value="baseline and differential"/>
</dbReference>
<dbReference type="GO" id="GO:0005737">
    <property type="term" value="C:cytoplasm"/>
    <property type="evidence" value="ECO:0000250"/>
    <property type="project" value="UniProtKB"/>
</dbReference>
<dbReference type="GO" id="GO:0005634">
    <property type="term" value="C:nucleus"/>
    <property type="evidence" value="ECO:0000250"/>
    <property type="project" value="UniProtKB"/>
</dbReference>
<dbReference type="GO" id="GO:0005886">
    <property type="term" value="C:plasma membrane"/>
    <property type="evidence" value="ECO:0007669"/>
    <property type="project" value="UniProtKB-SubCell"/>
</dbReference>
<dbReference type="GO" id="GO:0010427">
    <property type="term" value="F:abscisic acid binding"/>
    <property type="evidence" value="ECO:0000314"/>
    <property type="project" value="UniProtKB"/>
</dbReference>
<dbReference type="GO" id="GO:0042803">
    <property type="term" value="F:protein homodimerization activity"/>
    <property type="evidence" value="ECO:0000250"/>
    <property type="project" value="UniProtKB"/>
</dbReference>
<dbReference type="GO" id="GO:0004864">
    <property type="term" value="F:protein phosphatase inhibitor activity"/>
    <property type="evidence" value="ECO:0000314"/>
    <property type="project" value="UniProtKB"/>
</dbReference>
<dbReference type="GO" id="GO:0038023">
    <property type="term" value="F:signaling receptor activity"/>
    <property type="evidence" value="ECO:0000314"/>
    <property type="project" value="UniProtKB"/>
</dbReference>
<dbReference type="GO" id="GO:0009738">
    <property type="term" value="P:abscisic acid-activated signaling pathway"/>
    <property type="evidence" value="ECO:0000314"/>
    <property type="project" value="UniProtKB"/>
</dbReference>
<dbReference type="CDD" id="cd07821">
    <property type="entry name" value="PYR_PYL_RCAR_like"/>
    <property type="match status" value="1"/>
</dbReference>
<dbReference type="DisProt" id="DP02995"/>
<dbReference type="FunFam" id="3.30.530.20:FF:000013">
    <property type="entry name" value="Abscisic acid receptor PYL9"/>
    <property type="match status" value="1"/>
</dbReference>
<dbReference type="Gene3D" id="3.30.530.20">
    <property type="match status" value="1"/>
</dbReference>
<dbReference type="InterPro" id="IPR050279">
    <property type="entry name" value="Plant_def-hormone_signal"/>
</dbReference>
<dbReference type="InterPro" id="IPR019587">
    <property type="entry name" value="Polyketide_cyclase/dehydratase"/>
</dbReference>
<dbReference type="InterPro" id="IPR023393">
    <property type="entry name" value="START-like_dom_sf"/>
</dbReference>
<dbReference type="PANTHER" id="PTHR31213:SF99">
    <property type="entry name" value="ABSCISIC ACID RECEPTOR PYL9"/>
    <property type="match status" value="1"/>
</dbReference>
<dbReference type="PANTHER" id="PTHR31213">
    <property type="entry name" value="OS08G0374000 PROTEIN-RELATED"/>
    <property type="match status" value="1"/>
</dbReference>
<dbReference type="Pfam" id="PF10604">
    <property type="entry name" value="Polyketide_cyc2"/>
    <property type="match status" value="1"/>
</dbReference>
<dbReference type="SUPFAM" id="SSF55961">
    <property type="entry name" value="Bet v1-like"/>
    <property type="match status" value="1"/>
</dbReference>
<proteinExistence type="evidence at protein level"/>
<sequence>MMDGVEGGTAMYGGLETVQYVRTHHQHLCRENQCTSALVKHIKAPLHLVWSLVRRFDQPQKYKPFVSRCTVIGDPEIGSLREVNVKSGLPATTSTERLELLDDEEHILGIKIIGGDHRLKNYSSILTVHPEIIEGRAGTMVIESFVVDVPQGNTKDETCYFVEALIRCNLKSLADVSERLASQDITQ</sequence>
<reference key="1">
    <citation type="journal article" date="2000" name="Nature">
        <title>Sequence and analysis of chromosome 1 of the plant Arabidopsis thaliana.</title>
        <authorList>
            <person name="Theologis A."/>
            <person name="Ecker J.R."/>
            <person name="Palm C.J."/>
            <person name="Federspiel N.A."/>
            <person name="Kaul S."/>
            <person name="White O."/>
            <person name="Alonso J."/>
            <person name="Altafi H."/>
            <person name="Araujo R."/>
            <person name="Bowman C.L."/>
            <person name="Brooks S.Y."/>
            <person name="Buehler E."/>
            <person name="Chan A."/>
            <person name="Chao Q."/>
            <person name="Chen H."/>
            <person name="Cheuk R.F."/>
            <person name="Chin C.W."/>
            <person name="Chung M.K."/>
            <person name="Conn L."/>
            <person name="Conway A.B."/>
            <person name="Conway A.R."/>
            <person name="Creasy T.H."/>
            <person name="Dewar K."/>
            <person name="Dunn P."/>
            <person name="Etgu P."/>
            <person name="Feldblyum T.V."/>
            <person name="Feng J.-D."/>
            <person name="Fong B."/>
            <person name="Fujii C.Y."/>
            <person name="Gill J.E."/>
            <person name="Goldsmith A.D."/>
            <person name="Haas B."/>
            <person name="Hansen N.F."/>
            <person name="Hughes B."/>
            <person name="Huizar L."/>
            <person name="Hunter J.L."/>
            <person name="Jenkins J."/>
            <person name="Johnson-Hopson C."/>
            <person name="Khan S."/>
            <person name="Khaykin E."/>
            <person name="Kim C.J."/>
            <person name="Koo H.L."/>
            <person name="Kremenetskaia I."/>
            <person name="Kurtz D.B."/>
            <person name="Kwan A."/>
            <person name="Lam B."/>
            <person name="Langin-Hooper S."/>
            <person name="Lee A."/>
            <person name="Lee J.M."/>
            <person name="Lenz C.A."/>
            <person name="Li J.H."/>
            <person name="Li Y.-P."/>
            <person name="Lin X."/>
            <person name="Liu S.X."/>
            <person name="Liu Z.A."/>
            <person name="Luros J.S."/>
            <person name="Maiti R."/>
            <person name="Marziali A."/>
            <person name="Militscher J."/>
            <person name="Miranda M."/>
            <person name="Nguyen M."/>
            <person name="Nierman W.C."/>
            <person name="Osborne B.I."/>
            <person name="Pai G."/>
            <person name="Peterson J."/>
            <person name="Pham P.K."/>
            <person name="Rizzo M."/>
            <person name="Rooney T."/>
            <person name="Rowley D."/>
            <person name="Sakano H."/>
            <person name="Salzberg S.L."/>
            <person name="Schwartz J.R."/>
            <person name="Shinn P."/>
            <person name="Southwick A.M."/>
            <person name="Sun H."/>
            <person name="Tallon L.J."/>
            <person name="Tambunga G."/>
            <person name="Toriumi M.J."/>
            <person name="Town C.D."/>
            <person name="Utterback T."/>
            <person name="Van Aken S."/>
            <person name="Vaysberg M."/>
            <person name="Vysotskaia V.S."/>
            <person name="Walker M."/>
            <person name="Wu D."/>
            <person name="Yu G."/>
            <person name="Fraser C.M."/>
            <person name="Venter J.C."/>
            <person name="Davis R.W."/>
        </authorList>
    </citation>
    <scope>NUCLEOTIDE SEQUENCE [LARGE SCALE GENOMIC DNA]</scope>
    <source>
        <strain>cv. Columbia</strain>
    </source>
</reference>
<reference key="2">
    <citation type="journal article" date="2017" name="Plant J.">
        <title>Araport11: a complete reannotation of the Arabidopsis thaliana reference genome.</title>
        <authorList>
            <person name="Cheng C.Y."/>
            <person name="Krishnakumar V."/>
            <person name="Chan A.P."/>
            <person name="Thibaud-Nissen F."/>
            <person name="Schobel S."/>
            <person name="Town C.D."/>
        </authorList>
    </citation>
    <scope>GENOME REANNOTATION</scope>
    <source>
        <strain>cv. Columbia</strain>
    </source>
</reference>
<reference key="3">
    <citation type="journal article" date="2003" name="Science">
        <title>Empirical analysis of transcriptional activity in the Arabidopsis genome.</title>
        <authorList>
            <person name="Yamada K."/>
            <person name="Lim J."/>
            <person name="Dale J.M."/>
            <person name="Chen H."/>
            <person name="Shinn P."/>
            <person name="Palm C.J."/>
            <person name="Southwick A.M."/>
            <person name="Wu H.C."/>
            <person name="Kim C.J."/>
            <person name="Nguyen M."/>
            <person name="Pham P.K."/>
            <person name="Cheuk R.F."/>
            <person name="Karlin-Newmann G."/>
            <person name="Liu S.X."/>
            <person name="Lam B."/>
            <person name="Sakano H."/>
            <person name="Wu T."/>
            <person name="Yu G."/>
            <person name="Miranda M."/>
            <person name="Quach H.L."/>
            <person name="Tripp M."/>
            <person name="Chang C.H."/>
            <person name="Lee J.M."/>
            <person name="Toriumi M.J."/>
            <person name="Chan M.M."/>
            <person name="Tang C.C."/>
            <person name="Onodera C.S."/>
            <person name="Deng J.M."/>
            <person name="Akiyama K."/>
            <person name="Ansari Y."/>
            <person name="Arakawa T."/>
            <person name="Banh J."/>
            <person name="Banno F."/>
            <person name="Bowser L."/>
            <person name="Brooks S.Y."/>
            <person name="Carninci P."/>
            <person name="Chao Q."/>
            <person name="Choy N."/>
            <person name="Enju A."/>
            <person name="Goldsmith A.D."/>
            <person name="Gurjal M."/>
            <person name="Hansen N.F."/>
            <person name="Hayashizaki Y."/>
            <person name="Johnson-Hopson C."/>
            <person name="Hsuan V.W."/>
            <person name="Iida K."/>
            <person name="Karnes M."/>
            <person name="Khan S."/>
            <person name="Koesema E."/>
            <person name="Ishida J."/>
            <person name="Jiang P.X."/>
            <person name="Jones T."/>
            <person name="Kawai J."/>
            <person name="Kamiya A."/>
            <person name="Meyers C."/>
            <person name="Nakajima M."/>
            <person name="Narusaka M."/>
            <person name="Seki M."/>
            <person name="Sakurai T."/>
            <person name="Satou M."/>
            <person name="Tamse R."/>
            <person name="Vaysberg M."/>
            <person name="Wallender E.K."/>
            <person name="Wong C."/>
            <person name="Yamamura Y."/>
            <person name="Yuan S."/>
            <person name="Shinozaki K."/>
            <person name="Davis R.W."/>
            <person name="Theologis A."/>
            <person name="Ecker J.R."/>
        </authorList>
    </citation>
    <scope>NUCLEOTIDE SEQUENCE [LARGE SCALE MRNA]</scope>
    <source>
        <strain>cv. Columbia</strain>
    </source>
</reference>
<reference key="4">
    <citation type="submission" date="2006-07" db="EMBL/GenBank/DDBJ databases">
        <title>Large-scale analysis of RIKEN Arabidopsis full-length (RAFL) cDNAs.</title>
        <authorList>
            <person name="Totoki Y."/>
            <person name="Seki M."/>
            <person name="Ishida J."/>
            <person name="Nakajima M."/>
            <person name="Enju A."/>
            <person name="Kamiya A."/>
            <person name="Narusaka M."/>
            <person name="Shin-i T."/>
            <person name="Nakagawa M."/>
            <person name="Sakamoto N."/>
            <person name="Oishi K."/>
            <person name="Kohara Y."/>
            <person name="Kobayashi M."/>
            <person name="Toyoda A."/>
            <person name="Sakaki Y."/>
            <person name="Sakurai T."/>
            <person name="Iida K."/>
            <person name="Akiyama K."/>
            <person name="Satou M."/>
            <person name="Toyoda T."/>
            <person name="Konagaya A."/>
            <person name="Carninci P."/>
            <person name="Kawai J."/>
            <person name="Hayashizaki Y."/>
            <person name="Shinozaki K."/>
        </authorList>
    </citation>
    <scope>NUCLEOTIDE SEQUENCE [LARGE SCALE MRNA]</scope>
    <source>
        <strain>cv. Columbia</strain>
    </source>
</reference>
<reference key="5">
    <citation type="submission" date="2002-03" db="EMBL/GenBank/DDBJ databases">
        <title>Full-length cDNA from Arabidopsis thaliana.</title>
        <authorList>
            <person name="Brover V.V."/>
            <person name="Troukhan M.E."/>
            <person name="Alexandrov N.A."/>
            <person name="Lu Y.-P."/>
            <person name="Flavell R.B."/>
            <person name="Feldmann K.A."/>
        </authorList>
    </citation>
    <scope>NUCLEOTIDE SEQUENCE [LARGE SCALE MRNA]</scope>
</reference>
<reference key="6">
    <citation type="journal article" date="2009" name="Science">
        <title>Regulators of PP2C phosphatase activity function as abscisic acid sensors.</title>
        <authorList>
            <person name="Ma Y."/>
            <person name="Szostkiewicz I."/>
            <person name="Korte A."/>
            <person name="Moes D."/>
            <person name="Yang Y."/>
            <person name="Christmann A."/>
            <person name="Grill E."/>
        </authorList>
    </citation>
    <scope>FUNCTION</scope>
    <scope>TISSUE SPECIFICITY</scope>
    <scope>INTERACTION WITH ABI1; ABI2 AND HAB1</scope>
    <scope>GENE FAMILY</scope>
</reference>
<reference key="7">
    <citation type="journal article" date="2009" name="Science">
        <title>Abscisic acid inhibits type 2C protein phosphatases via the PYR/PYL family of START proteins.</title>
        <authorList>
            <person name="Park S.-Y."/>
            <person name="Fung P."/>
            <person name="Nishimura N."/>
            <person name="Jensen D.R."/>
            <person name="Fujii H."/>
            <person name="Zhao Y."/>
            <person name="Lumba S."/>
            <person name="Santiago J."/>
            <person name="Rodrigues A."/>
            <person name="Chow T.F."/>
            <person name="Alfred S.E."/>
            <person name="Bonetta D."/>
            <person name="Finkelstein R."/>
            <person name="Provart N.J."/>
            <person name="Desveaux D."/>
            <person name="Rodriguez P.L."/>
            <person name="McCourt P."/>
            <person name="Zhu J.-K."/>
            <person name="Schroeder J.I."/>
            <person name="Volkman B.F."/>
            <person name="Cutler S.R."/>
        </authorList>
    </citation>
    <scope>INTERACTION WITH HAB1</scope>
    <scope>GENE FAMILY</scope>
    <scope>NOMENCLATURE</scope>
</reference>
<reference key="8">
    <citation type="journal article" date="2010" name="Plant J.">
        <title>PYR/PYL/RCAR family members are major in-vivo ABI1 protein phosphatase 2C-interacting proteins in Arabidopsis.</title>
        <authorList>
            <person name="Nishimura N."/>
            <person name="Sarkeshik A."/>
            <person name="Nito K."/>
            <person name="Park S.-Y."/>
            <person name="Wang A."/>
            <person name="Carvalho P.C."/>
            <person name="Lee S."/>
            <person name="Caddell D.F."/>
            <person name="Cutler S.R."/>
            <person name="Chory J."/>
            <person name="Yates J.R."/>
            <person name="Schroeder J.I."/>
        </authorList>
    </citation>
    <scope>INTERACTION WITH ABI1</scope>
    <scope>IDENTIFICATION BY MASS SPECTROMETRY</scope>
</reference>
<reference key="9">
    <citation type="journal article" date="2011" name="Mol. Cell">
        <title>The molecular basis of ABA-independent inhibition of PP2Cs by a subclass of PYL proteins.</title>
        <authorList>
            <person name="Hao Q."/>
            <person name="Yin P."/>
            <person name="Li W."/>
            <person name="Wang L."/>
            <person name="Yan C."/>
            <person name="Lin Z."/>
            <person name="Wu J.Z."/>
            <person name="Wang J."/>
            <person name="Yan S.F."/>
            <person name="Yan N."/>
        </authorList>
    </citation>
    <scope>FUNCTION</scope>
    <scope>MONOMER</scope>
    <scope>GENE FAMILY</scope>
</reference>
<reference key="10">
    <citation type="journal article" date="2014" name="Plant Cell">
        <title>Targeted degradation of abscisic acid receptors is mediated by the ubiquitin ligase substrate adaptor DDA1 in Arabidopsis.</title>
        <authorList>
            <person name="Irigoyen M.L."/>
            <person name="Iniesto E."/>
            <person name="Rodriguez L."/>
            <person name="Puga M.I."/>
            <person name="Yanagawa Y."/>
            <person name="Pick E."/>
            <person name="Strickland E."/>
            <person name="Paz-Ares J."/>
            <person name="Wei N."/>
            <person name="De Jaeger G."/>
            <person name="Rodriguez P.L."/>
            <person name="Deng X.W."/>
            <person name="Rubio V."/>
        </authorList>
    </citation>
    <scope>INTERACTION WITH DDA1</scope>
</reference>
<reference key="11">
    <citation type="journal article" date="2016" name="PLoS Genet.">
        <title>Type one protein phosphatase 1 and its regulatory protein inhibitor 2 negatively regulate ABA signaling.</title>
        <authorList>
            <person name="Hou Y.J."/>
            <person name="Zhu Y."/>
            <person name="Wang P."/>
            <person name="Zhao Y."/>
            <person name="Xie S."/>
            <person name="Batelli G."/>
            <person name="Wang B."/>
            <person name="Duan C.G."/>
            <person name="Wang X."/>
            <person name="Xing L."/>
            <person name="Lei M."/>
            <person name="Yan J."/>
            <person name="Zhu X."/>
            <person name="Zhu J.K."/>
        </authorList>
    </citation>
    <scope>INTERACTION WITH TOPP1</scope>
</reference>
<reference key="12">
    <citation type="journal article" date="2013" name="PLoS ONE">
        <title>Structural insights into the abscisic acid stereospecificity by the ABA receptors PYR/PYL/RCAR.</title>
        <authorList>
            <person name="Zhang X."/>
            <person name="Jiang L."/>
            <person name="Wang G."/>
            <person name="Yu L."/>
            <person name="Zhang Q."/>
            <person name="Xin Q."/>
            <person name="Wu W."/>
            <person name="Gong Z."/>
            <person name="Chen Z."/>
        </authorList>
    </citation>
    <scope>X-RAY CRYSTALLOGRAPHY (2.68 ANGSTROMS) IN COMPLEX WITH ABA</scope>
    <scope>FUNCTION</scope>
    <scope>MUTAGENESIS OF CYS-29; CYS-34; ILE-112; CYS-159 AND LEU-165</scope>
    <scope>DISULFIDE BOND</scope>
    <scope>INTERACTION WITH ABA</scope>
    <scope>GENE FAMILY</scope>
</reference>
<reference key="13">
    <citation type="journal article" date="2014" name="Genes Cells">
        <title>Mechanism of high-affinity abscisic acid binding to PYL9/RCAR1.</title>
        <authorList>
            <person name="Nakagawa M."/>
            <person name="Kagiyama M."/>
            <person name="Shibata N."/>
            <person name="Hirano Y."/>
            <person name="Hakoshima T."/>
        </authorList>
    </citation>
    <scope>X-RAY CRYSTALLOGRAPHY (1.90 ANGSTROMS) IN COMPLEX WITH ABA</scope>
    <scope>MUTAGENESIS OF CYS-29; CYS-34 AND CYS-159</scope>
    <scope>HOMODIMER</scope>
</reference>
<gene>
    <name type="primary">PYL9</name>
    <name type="synonym">RCAR1</name>
    <name type="ordered locus">At1g01360</name>
    <name type="ORF">F6F3.16</name>
</gene>
<organism>
    <name type="scientific">Arabidopsis thaliana</name>
    <name type="common">Mouse-ear cress</name>
    <dbReference type="NCBI Taxonomy" id="3702"/>
    <lineage>
        <taxon>Eukaryota</taxon>
        <taxon>Viridiplantae</taxon>
        <taxon>Streptophyta</taxon>
        <taxon>Embryophyta</taxon>
        <taxon>Tracheophyta</taxon>
        <taxon>Spermatophyta</taxon>
        <taxon>Magnoliopsida</taxon>
        <taxon>eudicotyledons</taxon>
        <taxon>Gunneridae</taxon>
        <taxon>Pentapetalae</taxon>
        <taxon>rosids</taxon>
        <taxon>malvids</taxon>
        <taxon>Brassicales</taxon>
        <taxon>Brassicaceae</taxon>
        <taxon>Camelineae</taxon>
        <taxon>Arabidopsis</taxon>
    </lineage>
</organism>
<feature type="chain" id="PRO_0000391744" description="Abscisic acid receptor PYL9">
    <location>
        <begin position="1"/>
        <end position="187"/>
    </location>
</feature>
<feature type="region of interest" description="START-like">
    <location>
        <begin position="27"/>
        <end position="178"/>
    </location>
</feature>
<feature type="short sequence motif" description="Gate loop" evidence="3">
    <location>
        <begin position="87"/>
        <end position="91"/>
    </location>
</feature>
<feature type="short sequence motif" description="Latch loop" evidence="3">
    <location>
        <begin position="117"/>
        <end position="119"/>
    </location>
</feature>
<feature type="binding site" evidence="9 11 14 15">
    <location>
        <position position="63"/>
    </location>
    <ligand>
        <name>abscisate</name>
        <dbReference type="ChEBI" id="CHEBI:62432"/>
    </ligand>
</feature>
<feature type="binding site" evidence="1">
    <location>
        <begin position="91"/>
        <end position="96"/>
    </location>
    <ligand>
        <name>abscisate</name>
        <dbReference type="ChEBI" id="CHEBI:62432"/>
    </ligand>
</feature>
<feature type="binding site" evidence="1">
    <location>
        <begin position="118"/>
        <end position="124"/>
    </location>
    <ligand>
        <name>abscisate</name>
        <dbReference type="ChEBI" id="CHEBI:62432"/>
    </ligand>
</feature>
<feature type="binding site" evidence="1">
    <location>
        <position position="143"/>
    </location>
    <ligand>
        <name>abscisate</name>
        <dbReference type="ChEBI" id="CHEBI:62432"/>
    </ligand>
</feature>
<feature type="site" description="Involved in ABA binding" evidence="11">
    <location>
        <position position="64"/>
    </location>
</feature>
<feature type="site" description="Involved in interactions with PP2Cs" evidence="1">
    <location>
        <position position="90"/>
    </location>
</feature>
<feature type="site" description="Involved in ABA binding" evidence="11">
    <location>
        <position position="110"/>
    </location>
</feature>
<feature type="site" description="Involved in interactions with PP2Cs" evidence="1">
    <location>
        <position position="154"/>
    </location>
</feature>
<feature type="site" description="Involved in ABA binding" evidence="11">
    <location>
        <position position="162"/>
    </location>
</feature>
<feature type="site" description="Involved in ABA binding" evidence="11">
    <location>
        <position position="165"/>
    </location>
</feature>
<feature type="disulfide bond" description="Reversible" evidence="9">
    <location>
        <begin position="29"/>
        <end position="159"/>
    </location>
</feature>
<feature type="disulfide bond" description="Reversible" evidence="9">
    <location>
        <begin position="34"/>
        <end position="159"/>
    </location>
</feature>
<feature type="mutagenesis site" description="Stable homogeneity in reducing condition." evidence="9 11">
    <original>C</original>
    <variation>S</variation>
    <location>
        <position position="29"/>
    </location>
</feature>
<feature type="mutagenesis site" description="Stable homogeneity in reducing condition." evidence="9 11">
    <original>C</original>
    <variation>S</variation>
    <location>
        <position position="34"/>
    </location>
</feature>
<feature type="mutagenesis site" description="Increased HAB1 inhibitory ability." evidence="9">
    <original>I</original>
    <variation>V</variation>
    <location>
        <position position="112"/>
    </location>
</feature>
<feature type="mutagenesis site" description="Abnormal stable homogeneity in reducing condition." evidence="9 11">
    <original>C</original>
    <variation>S</variation>
    <location>
        <position position="159"/>
    </location>
</feature>
<feature type="mutagenesis site" description="Slight potentiation of (-)-ABA-binding." evidence="9">
    <original>L</original>
    <variation>V</variation>
    <location>
        <position position="165"/>
    </location>
</feature>
<feature type="sequence conflict" description="In Ref. 1; AAM65514." evidence="13" ref="1">
    <original>G</original>
    <variation>D</variation>
    <location>
        <position position="7"/>
    </location>
</feature>
<feature type="helix" evidence="16">
    <location>
        <begin position="14"/>
        <end position="28"/>
    </location>
</feature>
<feature type="strand" evidence="16">
    <location>
        <begin position="33"/>
        <end position="44"/>
    </location>
</feature>
<feature type="helix" evidence="16">
    <location>
        <begin position="46"/>
        <end position="53"/>
    </location>
</feature>
<feature type="helix" evidence="16">
    <location>
        <begin position="59"/>
        <end position="61"/>
    </location>
</feature>
<feature type="strand" evidence="16">
    <location>
        <begin position="66"/>
        <end position="70"/>
    </location>
</feature>
<feature type="strand" evidence="16">
    <location>
        <begin position="80"/>
        <end position="85"/>
    </location>
</feature>
<feature type="strand" evidence="16">
    <location>
        <begin position="92"/>
        <end position="102"/>
    </location>
</feature>
<feature type="turn" evidence="16">
    <location>
        <begin position="103"/>
        <end position="106"/>
    </location>
</feature>
<feature type="strand" evidence="16">
    <location>
        <begin position="107"/>
        <end position="118"/>
    </location>
</feature>
<feature type="strand" evidence="16">
    <location>
        <begin position="123"/>
        <end position="133"/>
    </location>
</feature>
<feature type="strand" evidence="16">
    <location>
        <begin position="136"/>
        <end position="148"/>
    </location>
</feature>
<feature type="helix" evidence="16">
    <location>
        <begin position="155"/>
        <end position="181"/>
    </location>
</feature>
<comment type="function">
    <text evidence="6 8 9">Receptor for abscisic acid (ABA) required for ABA-mediated responses such as stomatal closure and germination inhibition. Inhibits the activity of group-A protein phosphatases type 2C (PP2Cs) in an ABA-independent manner but more efficiently when activated by ABA. Confers enhanced sensitivity to ABA (PubMed:19407143, PubMed:21658606, PubMed:23844015). Can be activated only by (+)-ABA but not by (-)-ABA (PubMed:23844015).</text>
</comment>
<comment type="subunit">
    <text evidence="1 5 6 7 8 9 10 11 12">Homodimer (PubMed:24645846). Monomer (PubMed:21658606). Binds ABA on one subunit only. Binds to CARs protein in an ABA-independent manner, both at the plasma membrane and in the nucleus (By similarity). Binds specifically (+)-ABA but not (-)-ABA (PubMed:23844015, PubMed:24645846). Interacts with HAB1, ABI1 and ABI2, and possibly with other PP2Cs (PubMed:19407142, PubMed:19407143, PubMed:19874541). Interacts with TOPP1 (PubMed:26943172). Interacts with DDA1 (PubMed:24563205).</text>
</comment>
<comment type="interaction">
    <interactant intactId="EBI-2349513">
        <id>Q84MC7</id>
    </interactant>
    <interactant intactId="EBI-782526">
        <id>P49597</id>
        <label>ABI1</label>
    </interactant>
    <organismsDiffer>false</organismsDiffer>
    <experiments>14</experiments>
</comment>
<comment type="interaction">
    <interactant intactId="EBI-2349513">
        <id>Q84MC7</id>
    </interactant>
    <interactant intactId="EBI-537680">
        <id>O04719</id>
        <label>ABI2</label>
    </interactant>
    <organismsDiffer>false</organismsDiffer>
    <experiments>7</experiments>
</comment>
<comment type="interaction">
    <interactant intactId="EBI-2349513">
        <id>Q84MC7</id>
    </interactant>
    <interactant intactId="EBI-979206">
        <id>Q9SFD5</id>
        <label>ADA2A</label>
    </interactant>
    <organismsDiffer>false</organismsDiffer>
    <experiments>3</experiments>
</comment>
<comment type="interaction">
    <interactant intactId="EBI-2349513">
        <id>Q84MC7</id>
    </interactant>
    <interactant intactId="EBI-1573499">
        <id>Q9LNW3</id>
        <label>AIP1</label>
    </interactant>
    <organismsDiffer>false</organismsDiffer>
    <experiments>9</experiments>
</comment>
<comment type="interaction">
    <interactant intactId="EBI-2349513">
        <id>Q84MC7</id>
    </interactant>
    <interactant intactId="EBI-25528474">
        <id>A0A1P8AVS2</id>
        <label>At1g72340</label>
    </interactant>
    <organismsDiffer>false</organismsDiffer>
    <experiments>3</experiments>
</comment>
<comment type="interaction">
    <interactant intactId="EBI-2349513">
        <id>Q84MC7</id>
    </interactant>
    <interactant intactId="EBI-4441103">
        <id>Q9ZW21</id>
        <label>At2g29380</label>
    </interactant>
    <organismsDiffer>false</organismsDiffer>
    <experiments>8</experiments>
</comment>
<comment type="interaction">
    <interactant intactId="EBI-2349513">
        <id>Q84MC7</id>
    </interactant>
    <interactant intactId="EBI-25528525">
        <id>A0A384L3Q5</id>
        <label>At3g58030</label>
    </interactant>
    <organismsDiffer>false</organismsDiffer>
    <experiments>3</experiments>
</comment>
<comment type="interaction">
    <interactant intactId="EBI-2349513">
        <id>Q84MC7</id>
    </interactant>
    <interactant intactId="EBI-4427572">
        <id>Q8GXD8</id>
        <label>At4g22250/T10I14_80</label>
    </interactant>
    <organismsDiffer>false</organismsDiffer>
    <experiments>3</experiments>
</comment>
<comment type="interaction">
    <interactant intactId="EBI-2349513">
        <id>Q84MC7</id>
    </interactant>
    <interactant intactId="EBI-1238561">
        <id>O82754</id>
        <label>At4g23050</label>
    </interactant>
    <organismsDiffer>false</organismsDiffer>
    <experiments>3</experiments>
</comment>
<comment type="interaction">
    <interactant intactId="EBI-2349513">
        <id>Q84MC7</id>
    </interactant>
    <interactant intactId="EBI-25519119">
        <id>A0A178WMH3</id>
        <label>AXX17_At1g24430</label>
    </interactant>
    <organismsDiffer>false</organismsDiffer>
    <experiments>3</experiments>
</comment>
<comment type="interaction">
    <interactant intactId="EBI-2349513">
        <id>Q84MC7</id>
    </interactant>
    <interactant intactId="EBI-25528354">
        <id>A0A384LEC9</id>
        <label>AXX17_At3g32170</label>
    </interactant>
    <organismsDiffer>false</organismsDiffer>
    <experiments>3</experiments>
</comment>
<comment type="interaction">
    <interactant intactId="EBI-2349513">
        <id>Q84MC7</id>
    </interactant>
    <interactant intactId="EBI-15192637">
        <id>Q9C7T4</id>
        <label>BHLH96</label>
    </interactant>
    <organismsDiffer>false</organismsDiffer>
    <experiments>3</experiments>
</comment>
<comment type="interaction">
    <interactant intactId="EBI-2349513">
        <id>Q84MC7</id>
    </interactant>
    <interactant intactId="EBI-1536756">
        <id>Q9SAD4</id>
        <label>ESR1</label>
    </interactant>
    <organismsDiffer>false</organismsDiffer>
    <experiments>3</experiments>
</comment>
<comment type="interaction">
    <interactant intactId="EBI-2349513">
        <id>Q84MC7</id>
    </interactant>
    <interactant intactId="EBI-4431436">
        <id>Q9LZL7</id>
        <label>FES1C</label>
    </interactant>
    <organismsDiffer>false</organismsDiffer>
    <experiments>3</experiments>
</comment>
<comment type="interaction">
    <interactant intactId="EBI-2349513">
        <id>Q84MC7</id>
    </interactant>
    <interactant intactId="EBI-2309302">
        <id>Q9CAJ0</id>
        <label>HAB1</label>
    </interactant>
    <organismsDiffer>false</organismsDiffer>
    <experiments>5</experiments>
</comment>
<comment type="interaction">
    <interactant intactId="EBI-2349513">
        <id>Q84MC7</id>
    </interactant>
    <interactant intactId="EBI-15803614">
        <id>Q9LNP9</id>
        <label>HAB2</label>
    </interactant>
    <organismsDiffer>false</organismsDiffer>
    <experiments>3</experiments>
</comment>
<comment type="interaction">
    <interactant intactId="EBI-2349513">
        <id>Q84MC7</id>
    </interactant>
    <interactant intactId="EBI-4434127">
        <id>O81027</id>
        <label>HMGCL</label>
    </interactant>
    <organismsDiffer>false</organismsDiffer>
    <experiments>3</experiments>
</comment>
<comment type="interaction">
    <interactant intactId="EBI-2349513">
        <id>Q84MC7</id>
    </interactant>
    <interactant intactId="EBI-4428388">
        <id>Q9FGM9</id>
        <label>HSP23.5</label>
    </interactant>
    <organismsDiffer>false</organismsDiffer>
    <experiments>3</experiments>
</comment>
<comment type="interaction">
    <interactant intactId="EBI-2349513">
        <id>Q84MC7</id>
    </interactant>
    <interactant intactId="EBI-15191579">
        <id>Q9C9X7</id>
        <label>IDD14</label>
    </interactant>
    <organismsDiffer>false</organismsDiffer>
    <experiments>3</experiments>
</comment>
<comment type="interaction">
    <interactant intactId="EBI-2349513">
        <id>Q84MC7</id>
    </interactant>
    <interactant intactId="EBI-4424157">
        <id>Q9SCK1</id>
        <label>LSU1</label>
    </interactant>
    <organismsDiffer>false</organismsDiffer>
    <experiments>3</experiments>
</comment>
<comment type="interaction">
    <interactant intactId="EBI-2349513">
        <id>Q84MC7</id>
    </interactant>
    <interactant intactId="EBI-25528560">
        <id>Q9FJ07</id>
        <label>MYB111</label>
    </interactant>
    <organismsDiffer>false</organismsDiffer>
    <experiments>3</experiments>
</comment>
<comment type="interaction">
    <interactant intactId="EBI-2349513">
        <id>Q84MC7</id>
    </interactant>
    <interactant intactId="EBI-25506855">
        <id>O23160</id>
        <label>MYB73</label>
    </interactant>
    <organismsDiffer>false</organismsDiffer>
    <experiments>7</experiments>
</comment>
<comment type="interaction">
    <interactant intactId="EBI-2349513">
        <id>Q84MC7</id>
    </interactant>
    <interactant intactId="EBI-2324225">
        <id>Q9SN12</id>
        <label>MYB77</label>
    </interactant>
    <organismsDiffer>false</organismsDiffer>
    <experiments>8</experiments>
</comment>
<comment type="interaction">
    <interactant intactId="EBI-2349513">
        <id>Q84MC7</id>
    </interactant>
    <interactant intactId="EBI-2319707">
        <id>Q94F58</id>
        <label>NAC089</label>
    </interactant>
    <organismsDiffer>false</organismsDiffer>
    <experiments>3</experiments>
</comment>
<comment type="interaction">
    <interactant intactId="EBI-2349513">
        <id>Q84MC7</id>
    </interactant>
    <interactant intactId="EBI-2125961">
        <id>Q9ZVL3</id>
        <label>NFYC3</label>
    </interactant>
    <organismsDiffer>false</organismsDiffer>
    <experiments>3</experiments>
</comment>
<comment type="interaction">
    <interactant intactId="EBI-2349513">
        <id>Q84MC7</id>
    </interactant>
    <interactant intactId="EBI-1645478">
        <id>Q38845</id>
        <label>PP2AA1</label>
    </interactant>
    <organismsDiffer>false</organismsDiffer>
    <experiments>3</experiments>
</comment>
<comment type="interaction">
    <interactant intactId="EBI-2349513">
        <id>Q84MC7</id>
    </interactant>
    <interactant intactId="EBI-7890412">
        <id>Q9XI19</id>
        <label>PTAC6</label>
    </interactant>
    <organismsDiffer>false</organismsDiffer>
    <experiments>3</experiments>
</comment>
<comment type="interaction">
    <interactant intactId="EBI-2349513">
        <id>Q84MC7</id>
    </interactant>
    <interactant intactId="EBI-3133327">
        <id>O82277</id>
        <label>TCP10</label>
    </interactant>
    <organismsDiffer>false</organismsDiffer>
    <experiments>3</experiments>
</comment>
<comment type="interaction">
    <interactant intactId="EBI-2349513">
        <id>Q84MC7</id>
    </interactant>
    <interactant intactId="EBI-4424877">
        <id>Q9S7W5</id>
        <label>TCP13</label>
    </interactant>
    <organismsDiffer>false</organismsDiffer>
    <experiments>3</experiments>
</comment>
<comment type="interaction">
    <interactant intactId="EBI-2349513">
        <id>Q84MC7</id>
    </interactant>
    <interactant intactId="EBI-4426144">
        <id>Q9C9L2</id>
        <label>TCP15</label>
    </interactant>
    <organismsDiffer>false</organismsDiffer>
    <experiments>3</experiments>
</comment>
<comment type="interaction">
    <interactant intactId="EBI-2349513">
        <id>Q84MC7</id>
    </interactant>
    <interactant intactId="EBI-15192731">
        <id>A1YKT1</id>
        <label>TCP18</label>
    </interactant>
    <organismsDiffer>false</organismsDiffer>
    <experiments>3</experiments>
</comment>
<comment type="interaction">
    <interactant intactId="EBI-2349513">
        <id>Q84MC7</id>
    </interactant>
    <interactant intactId="EBI-4426178">
        <id>Q9LT89</id>
        <label>TCP19</label>
    </interactant>
    <organismsDiffer>false</organismsDiffer>
    <experiments>3</experiments>
</comment>
<comment type="interaction">
    <interactant intactId="EBI-2349513">
        <id>Q84MC7</id>
    </interactant>
    <interactant intactId="EBI-4426168">
        <id>Q9FTA2</id>
        <label>TCP21</label>
    </interactant>
    <organismsDiffer>false</organismsDiffer>
    <experiments>3</experiments>
</comment>
<comment type="interaction">
    <interactant intactId="EBI-2349513">
        <id>Q84MC7</id>
    </interactant>
    <interactant intactId="EBI-25522447">
        <id>Q9MAH8</id>
        <label>TCP3</label>
    </interactant>
    <organismsDiffer>false</organismsDiffer>
    <experiments>3</experiments>
</comment>
<comment type="interaction">
    <interactant intactId="EBI-2349513">
        <id>Q84MC7</id>
    </interactant>
    <interactant intactId="EBI-9838721">
        <id>O64647</id>
        <label>TCP9</label>
    </interactant>
    <organismsDiffer>false</organismsDiffer>
    <experiments>3</experiments>
</comment>
<comment type="interaction">
    <interactant intactId="EBI-2349513">
        <id>Q84MC7</id>
    </interactant>
    <interactant intactId="EBI-4426557">
        <id>Q84MB2</id>
        <label>TIFY8</label>
    </interactant>
    <organismsDiffer>false</organismsDiffer>
    <experiments>3</experiments>
</comment>
<comment type="interaction">
    <interactant intactId="EBI-2349513">
        <id>Q84MC7</id>
    </interactant>
    <interactant intactId="EBI-4424568">
        <id>Q9LVG2</id>
        <label>TOE2</label>
    </interactant>
    <organismsDiffer>false</organismsDiffer>
    <experiments>3</experiments>
</comment>
<comment type="interaction">
    <interactant intactId="EBI-2349513">
        <id>Q84MC7</id>
    </interactant>
    <interactant intactId="EBI-2616403">
        <id>Q8W4L5</id>
        <label>VAL1</label>
    </interactant>
    <organismsDiffer>false</organismsDiffer>
    <experiments>3</experiments>
</comment>
<comment type="interaction">
    <interactant intactId="EBI-2349513">
        <id>Q84MC7</id>
    </interactant>
    <interactant intactId="EBI-1779367">
        <id>Q8GXA4</id>
        <label>WIP1</label>
    </interactant>
    <organismsDiffer>false</organismsDiffer>
    <experiments>3</experiments>
</comment>
<comment type="interaction">
    <interactant intactId="EBI-2349513">
        <id>Q84MC7</id>
    </interactant>
    <interactant intactId="EBI-1807651">
        <id>Q9SCU5</id>
        <label>WNK5</label>
    </interactant>
    <organismsDiffer>false</organismsDiffer>
    <experiments>3</experiments>
</comment>
<comment type="interaction">
    <interactant intactId="EBI-2349513">
        <id>Q84MC7</id>
    </interactant>
    <interactant intactId="EBI-15208488">
        <id>Q93WT0</id>
        <label>WRKY31</label>
    </interactant>
    <organismsDiffer>false</organismsDiffer>
    <experiments>3</experiments>
</comment>
<comment type="subcellular location">
    <subcellularLocation>
        <location evidence="4">Cytoplasm</location>
    </subcellularLocation>
    <subcellularLocation>
        <location evidence="1">Nucleus</location>
    </subcellularLocation>
    <subcellularLocation>
        <location evidence="1">Cell membrane</location>
    </subcellularLocation>
    <text evidence="2">Localizes at the plasma membrane in the presence of a CAR protein.</text>
</comment>
<comment type="tissue specificity">
    <text evidence="6">Expressed in root tips, vascular tissues, stomata, flowers, pollen tubes and developing seeds.</text>
</comment>
<comment type="domain">
    <text evidence="3">Upon interaction with ABA, the 'latch' and 'gate' loops change in conformation leading to a tight dimerization and the creation a surface that enables the receptor to dock into and inhibit the PP2C active site.</text>
</comment>
<comment type="similarity">
    <text evidence="13">Belongs to the PYR/PYL/RCAR abscisic acid intracellular receptor family.</text>
</comment>
<comment type="sequence caution" evidence="13">
    <conflict type="erroneous initiation">
        <sequence resource="EMBL-CDS" id="AAF97339"/>
    </conflict>
    <text>Truncated N-terminus.</text>
</comment>
<comment type="sequence caution" evidence="13">
    <conflict type="erroneous initiation">
        <sequence resource="EMBL-CDS" id="AAM65514"/>
    </conflict>
    <text>Truncated N-terminus.</text>
</comment>
<evidence type="ECO:0000250" key="1">
    <source>
        <dbReference type="UniProtKB" id="O49686"/>
    </source>
</evidence>
<evidence type="ECO:0000250" key="2">
    <source>
        <dbReference type="UniProtKB" id="O80920"/>
    </source>
</evidence>
<evidence type="ECO:0000250" key="3">
    <source>
        <dbReference type="UniProtKB" id="Q8VZS8"/>
    </source>
</evidence>
<evidence type="ECO:0000250" key="4">
    <source>
        <dbReference type="UniProtKB" id="Q9FLB1"/>
    </source>
</evidence>
<evidence type="ECO:0000269" key="5">
    <source>
    </source>
</evidence>
<evidence type="ECO:0000269" key="6">
    <source>
    </source>
</evidence>
<evidence type="ECO:0000269" key="7">
    <source>
    </source>
</evidence>
<evidence type="ECO:0000269" key="8">
    <source>
    </source>
</evidence>
<evidence type="ECO:0000269" key="9">
    <source>
    </source>
</evidence>
<evidence type="ECO:0000269" key="10">
    <source>
    </source>
</evidence>
<evidence type="ECO:0000269" key="11">
    <source>
    </source>
</evidence>
<evidence type="ECO:0000269" key="12">
    <source>
    </source>
</evidence>
<evidence type="ECO:0000305" key="13"/>
<evidence type="ECO:0007744" key="14">
    <source>
        <dbReference type="PDB" id="3OQU"/>
    </source>
</evidence>
<evidence type="ECO:0007744" key="15">
    <source>
        <dbReference type="PDB" id="3W9R"/>
    </source>
</evidence>
<evidence type="ECO:0007829" key="16">
    <source>
        <dbReference type="PDB" id="3W9R"/>
    </source>
</evidence>
<name>PYL9_ARATH</name>
<keyword id="KW-0002">3D-structure</keyword>
<keyword id="KW-0938">Abscisic acid signaling pathway</keyword>
<keyword id="KW-1003">Cell membrane</keyword>
<keyword id="KW-0963">Cytoplasm</keyword>
<keyword id="KW-1015">Disulfide bond</keyword>
<keyword id="KW-0472">Membrane</keyword>
<keyword id="KW-0539">Nucleus</keyword>
<keyword id="KW-0650">Protein phosphatase inhibitor</keyword>
<keyword id="KW-0675">Receptor</keyword>
<keyword id="KW-1185">Reference proteome</keyword>
<protein>
    <recommendedName>
        <fullName>Abscisic acid receptor PYL9</fullName>
    </recommendedName>
    <alternativeName>
        <fullName>ABI1-binding protein 4</fullName>
    </alternativeName>
    <alternativeName>
        <fullName>PYR1-like protein 9</fullName>
    </alternativeName>
    <alternativeName>
        <fullName>Regulatory components of ABA receptor 1</fullName>
    </alternativeName>
</protein>
<accession>Q84MC7</accession>
<accession>Q8LA91</accession>
<accession>Q9LNI7</accession>